<gene>
    <name type="primary">ntrB</name>
    <name type="synonym">nifR2</name>
    <name type="ordered locus">RCAP_rcc01797</name>
</gene>
<proteinExistence type="inferred from homology"/>
<sequence length="355" mass="38309">MNLPPPGIIWNSLPLPALMLDVNDRVIEINPAAELFLNLSARALKGQALGERLAISAPLEEIFARVRKNRSALFVNDVDLTTGERAPVQCNLQAAPIADDPETVLLLISPREIADRLGRASMVKSAARSAIGMAEMLAHEIKNPLAGIAGAAQLLSMGLSGEDLELTDLIVDETRRIVKLLEQVEQFGNVRPPEMKPVNIHDVLDRARKSAGVGFGAHMLIVEDYDPSLPPTLGDADQLTQVFLNLLKNASEAAKGQGTIRLRTFYDYALRLRRPDGGGQRLPLQVEVIDDGPGIPADIASSIFEPFVSGRENGTGLGLALVSKIISEHNGWISVESAPGRTLFRISLPVAPKEL</sequence>
<feature type="chain" id="PRO_0000074832" description="Sensory histidine kinase/phosphatase NtrB">
    <location>
        <begin position="1"/>
        <end position="355"/>
    </location>
</feature>
<feature type="domain" description="PAS">
    <location>
        <begin position="4"/>
        <end position="71"/>
    </location>
</feature>
<feature type="domain" description="Histidine kinase" evidence="2">
    <location>
        <begin position="136"/>
        <end position="352"/>
    </location>
</feature>
<feature type="modified residue" description="Phosphohistidine; by autocatalysis" evidence="2">
    <location>
        <position position="139"/>
    </location>
</feature>
<feature type="sequence conflict" description="In Ref. 1; CAA30921 and 2; CAA51074." evidence="3" ref="1 2">
    <original>A</original>
    <variation>AG</variation>
    <location>
        <position position="130"/>
    </location>
</feature>
<feature type="sequence conflict" description="In Ref. 1; CAA30921 and 2; CAA51074." evidence="3" ref="1 2">
    <original>L</original>
    <variation>V</variation>
    <location>
        <position position="229"/>
    </location>
</feature>
<feature type="sequence conflict" description="In Ref. 1; CAA30921 and 2; CAA51074." evidence="3" ref="1 2">
    <original>QRL</original>
    <variation>SAV</variation>
    <location>
        <begin position="280"/>
        <end position="282"/>
    </location>
</feature>
<dbReference type="EC" id="2.7.13.3" evidence="1"/>
<dbReference type="EC" id="3.1.3.-" evidence="1"/>
<dbReference type="EMBL" id="X12359">
    <property type="protein sequence ID" value="CAA30921.1"/>
    <property type="molecule type" value="Genomic_DNA"/>
</dbReference>
<dbReference type="EMBL" id="X72382">
    <property type="protein sequence ID" value="CAA51074.1"/>
    <property type="molecule type" value="Genomic_DNA"/>
</dbReference>
<dbReference type="EMBL" id="CP001312">
    <property type="protein sequence ID" value="ADE85542.1"/>
    <property type="molecule type" value="Genomic_DNA"/>
</dbReference>
<dbReference type="PIR" id="S03320">
    <property type="entry name" value="S03320"/>
</dbReference>
<dbReference type="RefSeq" id="WP_013067521.1">
    <property type="nucleotide sequence ID" value="NC_014034.1"/>
</dbReference>
<dbReference type="SMR" id="P09431"/>
<dbReference type="IntAct" id="P09431">
    <property type="interactions" value="1"/>
</dbReference>
<dbReference type="STRING" id="272942.RCAP_rcc01797"/>
<dbReference type="GeneID" id="31490672"/>
<dbReference type="KEGG" id="rcp:RCAP_rcc01797"/>
<dbReference type="eggNOG" id="COG3852">
    <property type="taxonomic scope" value="Bacteria"/>
</dbReference>
<dbReference type="HOGENOM" id="CLU_000445_114_39_5"/>
<dbReference type="OrthoDB" id="9789238at2"/>
<dbReference type="BRENDA" id="2.7.13.3">
    <property type="organism ID" value="5381"/>
</dbReference>
<dbReference type="Proteomes" id="UP000002361">
    <property type="component" value="Chromosome"/>
</dbReference>
<dbReference type="GO" id="GO:0005737">
    <property type="term" value="C:cytoplasm"/>
    <property type="evidence" value="ECO:0007669"/>
    <property type="project" value="UniProtKB-SubCell"/>
</dbReference>
<dbReference type="GO" id="GO:0005524">
    <property type="term" value="F:ATP binding"/>
    <property type="evidence" value="ECO:0007669"/>
    <property type="project" value="UniProtKB-KW"/>
</dbReference>
<dbReference type="GO" id="GO:0016787">
    <property type="term" value="F:hydrolase activity"/>
    <property type="evidence" value="ECO:0007669"/>
    <property type="project" value="UniProtKB-KW"/>
</dbReference>
<dbReference type="GO" id="GO:0000155">
    <property type="term" value="F:phosphorelay sensor kinase activity"/>
    <property type="evidence" value="ECO:0007669"/>
    <property type="project" value="InterPro"/>
</dbReference>
<dbReference type="GO" id="GO:0009399">
    <property type="term" value="P:nitrogen fixation"/>
    <property type="evidence" value="ECO:0007669"/>
    <property type="project" value="UniProtKB-KW"/>
</dbReference>
<dbReference type="CDD" id="cd16918">
    <property type="entry name" value="HATPase_Glnl-NtrB-like"/>
    <property type="match status" value="1"/>
</dbReference>
<dbReference type="CDD" id="cd00082">
    <property type="entry name" value="HisKA"/>
    <property type="match status" value="1"/>
</dbReference>
<dbReference type="CDD" id="cd00130">
    <property type="entry name" value="PAS"/>
    <property type="match status" value="1"/>
</dbReference>
<dbReference type="Gene3D" id="1.10.287.130">
    <property type="match status" value="1"/>
</dbReference>
<dbReference type="Gene3D" id="3.30.565.10">
    <property type="entry name" value="Histidine kinase-like ATPase, C-terminal domain"/>
    <property type="match status" value="1"/>
</dbReference>
<dbReference type="Gene3D" id="3.30.450.20">
    <property type="entry name" value="PAS domain"/>
    <property type="match status" value="1"/>
</dbReference>
<dbReference type="InterPro" id="IPR036890">
    <property type="entry name" value="HATPase_C_sf"/>
</dbReference>
<dbReference type="InterPro" id="IPR005467">
    <property type="entry name" value="His_kinase_dom"/>
</dbReference>
<dbReference type="InterPro" id="IPR003661">
    <property type="entry name" value="HisK_dim/P_dom"/>
</dbReference>
<dbReference type="InterPro" id="IPR036097">
    <property type="entry name" value="HisK_dim/P_sf"/>
</dbReference>
<dbReference type="InterPro" id="IPR000014">
    <property type="entry name" value="PAS"/>
</dbReference>
<dbReference type="InterPro" id="IPR035965">
    <property type="entry name" value="PAS-like_dom_sf"/>
</dbReference>
<dbReference type="InterPro" id="IPR004358">
    <property type="entry name" value="Sig_transdc_His_kin-like_C"/>
</dbReference>
<dbReference type="PANTHER" id="PTHR43065:SF10">
    <property type="entry name" value="PEROXIDE STRESS-ACTIVATED HISTIDINE KINASE MAK3"/>
    <property type="match status" value="1"/>
</dbReference>
<dbReference type="PANTHER" id="PTHR43065">
    <property type="entry name" value="SENSOR HISTIDINE KINASE"/>
    <property type="match status" value="1"/>
</dbReference>
<dbReference type="Pfam" id="PF02518">
    <property type="entry name" value="HATPase_c"/>
    <property type="match status" value="1"/>
</dbReference>
<dbReference type="Pfam" id="PF00512">
    <property type="entry name" value="HisKA"/>
    <property type="match status" value="1"/>
</dbReference>
<dbReference type="PRINTS" id="PR00344">
    <property type="entry name" value="BCTRLSENSOR"/>
</dbReference>
<dbReference type="SMART" id="SM00387">
    <property type="entry name" value="HATPase_c"/>
    <property type="match status" value="1"/>
</dbReference>
<dbReference type="SMART" id="SM00388">
    <property type="entry name" value="HisKA"/>
    <property type="match status" value="1"/>
</dbReference>
<dbReference type="SMART" id="SM00091">
    <property type="entry name" value="PAS"/>
    <property type="match status" value="1"/>
</dbReference>
<dbReference type="SUPFAM" id="SSF55874">
    <property type="entry name" value="ATPase domain of HSP90 chaperone/DNA topoisomerase II/histidine kinase"/>
    <property type="match status" value="1"/>
</dbReference>
<dbReference type="SUPFAM" id="SSF47384">
    <property type="entry name" value="Homodimeric domain of signal transducing histidine kinase"/>
    <property type="match status" value="1"/>
</dbReference>
<dbReference type="SUPFAM" id="SSF55785">
    <property type="entry name" value="PYP-like sensor domain (PAS domain)"/>
    <property type="match status" value="1"/>
</dbReference>
<dbReference type="PROSITE" id="PS50109">
    <property type="entry name" value="HIS_KIN"/>
    <property type="match status" value="1"/>
</dbReference>
<organism>
    <name type="scientific">Rhodobacter capsulatus (strain ATCC BAA-309 / NBRC 16581 / SB1003)</name>
    <dbReference type="NCBI Taxonomy" id="272942"/>
    <lineage>
        <taxon>Bacteria</taxon>
        <taxon>Pseudomonadati</taxon>
        <taxon>Pseudomonadota</taxon>
        <taxon>Alphaproteobacteria</taxon>
        <taxon>Rhodobacterales</taxon>
        <taxon>Rhodobacter group</taxon>
        <taxon>Rhodobacter</taxon>
    </lineage>
</organism>
<protein>
    <recommendedName>
        <fullName evidence="1">Sensory histidine kinase/phosphatase NtrB</fullName>
        <ecNumber evidence="1">2.7.13.3</ecNumber>
        <ecNumber evidence="1">3.1.3.-</ecNumber>
    </recommendedName>
    <alternativeName>
        <fullName evidence="1">Nitrogen regulation protein NR(II)</fullName>
    </alternativeName>
    <alternativeName>
        <fullName evidence="1">Nitrogen regulator II</fullName>
        <shortName evidence="1">NRII</shortName>
    </alternativeName>
</protein>
<reference key="1">
    <citation type="journal article" date="1989" name="Mol. Gen. Genet.">
        <title>The DNA sequence of the Rhodobacter capsulatus ntrA, ntrB and ntrC gene analogues required for nitrogen fixation.</title>
        <authorList>
            <person name="Jones R."/>
            <person name="Haselkorn R."/>
        </authorList>
    </citation>
    <scope>NUCLEOTIDE SEQUENCE [GENOMIC DNA]</scope>
    <source>
        <strain>ATCC BAA-309 / NBRC 16581 / SB1003</strain>
    </source>
</reference>
<reference key="2">
    <citation type="journal article" date="1993" name="Mol. Microbiol.">
        <title>Sequence, genetic, and lacZ fusion analyses of a nifR3-ntrB-ntrC operon in Rhodobacter capsulatus.</title>
        <authorList>
            <person name="Foster-Hartnett D."/>
            <person name="Cullen P.J."/>
            <person name="Gabbert K.K."/>
            <person name="Kranz R.G."/>
        </authorList>
    </citation>
    <scope>NUCLEOTIDE SEQUENCE [GENOMIC DNA]</scope>
    <source>
        <strain>ATCC BAA-309 / NBRC 16581 / SB1003</strain>
    </source>
</reference>
<reference key="3">
    <citation type="journal article" date="2010" name="J. Bacteriol.">
        <title>Complete genome sequence of the photosynthetic purple nonsulfur bacterium Rhodobacter capsulatus SB 1003.</title>
        <authorList>
            <person name="Strnad H."/>
            <person name="Lapidus A."/>
            <person name="Paces J."/>
            <person name="Ulbrich P."/>
            <person name="Vlcek C."/>
            <person name="Paces V."/>
            <person name="Haselkorn R."/>
        </authorList>
    </citation>
    <scope>NUCLEOTIDE SEQUENCE [LARGE SCALE GENOMIC DNA]</scope>
    <source>
        <strain>ATCC BAA-309 / NBRC 16581 / SB1003</strain>
    </source>
</reference>
<accession>P09431</accession>
<accession>D5AUA3</accession>
<keyword id="KW-0067">ATP-binding</keyword>
<keyword id="KW-0963">Cytoplasm</keyword>
<keyword id="KW-0378">Hydrolase</keyword>
<keyword id="KW-0418">Kinase</keyword>
<keyword id="KW-0535">Nitrogen fixation</keyword>
<keyword id="KW-0547">Nucleotide-binding</keyword>
<keyword id="KW-0597">Phosphoprotein</keyword>
<keyword id="KW-1185">Reference proteome</keyword>
<keyword id="KW-0808">Transferase</keyword>
<keyword id="KW-0902">Two-component regulatory system</keyword>
<name>NTRB_RHOCB</name>
<evidence type="ECO:0000250" key="1">
    <source>
        <dbReference type="UniProtKB" id="P0AFB5"/>
    </source>
</evidence>
<evidence type="ECO:0000255" key="2">
    <source>
        <dbReference type="PROSITE-ProRule" id="PRU00107"/>
    </source>
</evidence>
<evidence type="ECO:0000305" key="3"/>
<comment type="function">
    <text evidence="1">Member of the two-component regulatory system NtrB/NtrC, which controls expression of the nitrogen-regulated (ntr) genes in response to nitrogen limitation. Under conditions of nitrogen limitation, NtrB autophosphorylates and transfers the phosphoryl group to NtrC. In the presence of nitrogen, acts as a phosphatase that dephosphorylates and inactivates NtrC.</text>
</comment>
<comment type="catalytic activity">
    <reaction evidence="1">
        <text>ATP + protein L-histidine = ADP + protein N-phospho-L-histidine.</text>
        <dbReference type="EC" id="2.7.13.3"/>
    </reaction>
</comment>
<comment type="subcellular location">
    <subcellularLocation>
        <location evidence="1">Cytoplasm</location>
    </subcellularLocation>
</comment>
<comment type="PTM">
    <text evidence="1">Autophosphorylated.</text>
</comment>